<proteinExistence type="inferred from homology"/>
<dbReference type="EC" id="1.4.3.5" evidence="1"/>
<dbReference type="EMBL" id="BX640434">
    <property type="protein sequence ID" value="CAE38891.1"/>
    <property type="molecule type" value="Genomic_DNA"/>
</dbReference>
<dbReference type="RefSeq" id="WP_003814302.1">
    <property type="nucleotide sequence ID" value="NC_002928.3"/>
</dbReference>
<dbReference type="SMR" id="Q7W4Q1"/>
<dbReference type="GeneID" id="93205395"/>
<dbReference type="KEGG" id="bpa:BPP3607"/>
<dbReference type="HOGENOM" id="CLU_032263_2_2_4"/>
<dbReference type="UniPathway" id="UPA01068">
    <property type="reaction ID" value="UER00304"/>
</dbReference>
<dbReference type="UniPathway" id="UPA01068">
    <property type="reaction ID" value="UER00305"/>
</dbReference>
<dbReference type="Proteomes" id="UP000001421">
    <property type="component" value="Chromosome"/>
</dbReference>
<dbReference type="GO" id="GO:0010181">
    <property type="term" value="F:FMN binding"/>
    <property type="evidence" value="ECO:0007669"/>
    <property type="project" value="UniProtKB-UniRule"/>
</dbReference>
<dbReference type="GO" id="GO:0004733">
    <property type="term" value="F:pyridoxamine phosphate oxidase activity"/>
    <property type="evidence" value="ECO:0007669"/>
    <property type="project" value="UniProtKB-UniRule"/>
</dbReference>
<dbReference type="GO" id="GO:0008615">
    <property type="term" value="P:pyridoxine biosynthetic process"/>
    <property type="evidence" value="ECO:0007669"/>
    <property type="project" value="UniProtKB-KW"/>
</dbReference>
<dbReference type="FunFam" id="2.30.110.10:FF:000005">
    <property type="entry name" value="NAD(P)H-hydrate epimerase"/>
    <property type="match status" value="1"/>
</dbReference>
<dbReference type="Gene3D" id="2.30.110.10">
    <property type="entry name" value="Electron Transport, Fmn-binding Protein, Chain A"/>
    <property type="match status" value="1"/>
</dbReference>
<dbReference type="HAMAP" id="MF_01629">
    <property type="entry name" value="PdxH"/>
    <property type="match status" value="1"/>
</dbReference>
<dbReference type="InterPro" id="IPR000659">
    <property type="entry name" value="Pyridox_Oxase"/>
</dbReference>
<dbReference type="InterPro" id="IPR019740">
    <property type="entry name" value="Pyridox_Oxase_CS"/>
</dbReference>
<dbReference type="InterPro" id="IPR011576">
    <property type="entry name" value="Pyridox_Oxase_N"/>
</dbReference>
<dbReference type="InterPro" id="IPR019576">
    <property type="entry name" value="Pyridoxamine_oxidase_dimer_C"/>
</dbReference>
<dbReference type="InterPro" id="IPR012349">
    <property type="entry name" value="Split_barrel_FMN-bd"/>
</dbReference>
<dbReference type="NCBIfam" id="TIGR00558">
    <property type="entry name" value="pdxH"/>
    <property type="match status" value="1"/>
</dbReference>
<dbReference type="NCBIfam" id="NF004231">
    <property type="entry name" value="PRK05679.1"/>
    <property type="match status" value="1"/>
</dbReference>
<dbReference type="PANTHER" id="PTHR10851:SF0">
    <property type="entry name" value="PYRIDOXINE-5'-PHOSPHATE OXIDASE"/>
    <property type="match status" value="1"/>
</dbReference>
<dbReference type="PANTHER" id="PTHR10851">
    <property type="entry name" value="PYRIDOXINE-5-PHOSPHATE OXIDASE"/>
    <property type="match status" value="1"/>
</dbReference>
<dbReference type="Pfam" id="PF10590">
    <property type="entry name" value="PNP_phzG_C"/>
    <property type="match status" value="1"/>
</dbReference>
<dbReference type="Pfam" id="PF01243">
    <property type="entry name" value="PNPOx_N"/>
    <property type="match status" value="1"/>
</dbReference>
<dbReference type="PIRSF" id="PIRSF000190">
    <property type="entry name" value="Pyd_amn-ph_oxd"/>
    <property type="match status" value="1"/>
</dbReference>
<dbReference type="SUPFAM" id="SSF50475">
    <property type="entry name" value="FMN-binding split barrel"/>
    <property type="match status" value="1"/>
</dbReference>
<dbReference type="PROSITE" id="PS01064">
    <property type="entry name" value="PYRIDOX_OXIDASE"/>
    <property type="match status" value="1"/>
</dbReference>
<feature type="chain" id="PRO_0000167690" description="Pyridoxine/pyridoxamine 5'-phosphate oxidase">
    <location>
        <begin position="1"/>
        <end position="210"/>
    </location>
</feature>
<feature type="binding site" evidence="1">
    <location>
        <begin position="7"/>
        <end position="10"/>
    </location>
    <ligand>
        <name>substrate</name>
    </ligand>
</feature>
<feature type="binding site" evidence="1">
    <location>
        <begin position="60"/>
        <end position="65"/>
    </location>
    <ligand>
        <name>FMN</name>
        <dbReference type="ChEBI" id="CHEBI:58210"/>
    </ligand>
</feature>
<feature type="binding site" evidence="1">
    <location>
        <position position="65"/>
    </location>
    <ligand>
        <name>substrate</name>
    </ligand>
</feature>
<feature type="binding site" evidence="1">
    <location>
        <begin position="75"/>
        <end position="76"/>
    </location>
    <ligand>
        <name>FMN</name>
        <dbReference type="ChEBI" id="CHEBI:58210"/>
    </ligand>
</feature>
<feature type="binding site" evidence="1">
    <location>
        <position position="81"/>
    </location>
    <ligand>
        <name>FMN</name>
        <dbReference type="ChEBI" id="CHEBI:58210"/>
    </ligand>
</feature>
<feature type="binding site" evidence="1">
    <location>
        <position position="82"/>
    </location>
    <ligand>
        <name>FMN</name>
        <dbReference type="ChEBI" id="CHEBI:58210"/>
    </ligand>
</feature>
<feature type="binding site" evidence="1">
    <location>
        <position position="104"/>
    </location>
    <ligand>
        <name>FMN</name>
        <dbReference type="ChEBI" id="CHEBI:58210"/>
    </ligand>
</feature>
<feature type="binding site" evidence="1">
    <location>
        <position position="122"/>
    </location>
    <ligand>
        <name>substrate</name>
    </ligand>
</feature>
<feature type="binding site" evidence="1">
    <location>
        <position position="126"/>
    </location>
    <ligand>
        <name>substrate</name>
    </ligand>
</feature>
<feature type="binding site" evidence="1">
    <location>
        <position position="130"/>
    </location>
    <ligand>
        <name>substrate</name>
    </ligand>
</feature>
<feature type="binding site" evidence="1">
    <location>
        <begin position="139"/>
        <end position="140"/>
    </location>
    <ligand>
        <name>FMN</name>
        <dbReference type="ChEBI" id="CHEBI:58210"/>
    </ligand>
</feature>
<feature type="binding site" evidence="1">
    <location>
        <position position="182"/>
    </location>
    <ligand>
        <name>FMN</name>
        <dbReference type="ChEBI" id="CHEBI:58210"/>
    </ligand>
</feature>
<feature type="binding site" evidence="1">
    <location>
        <begin position="188"/>
        <end position="190"/>
    </location>
    <ligand>
        <name>substrate</name>
    </ligand>
</feature>
<feature type="binding site" evidence="1">
    <location>
        <position position="192"/>
    </location>
    <ligand>
        <name>FMN</name>
        <dbReference type="ChEBI" id="CHEBI:58210"/>
    </ligand>
</feature>
<evidence type="ECO:0000255" key="1">
    <source>
        <dbReference type="HAMAP-Rule" id="MF_01629"/>
    </source>
</evidence>
<gene>
    <name evidence="1" type="primary">pdxH</name>
    <name type="ordered locus">BPP3607</name>
</gene>
<keyword id="KW-0285">Flavoprotein</keyword>
<keyword id="KW-0288">FMN</keyword>
<keyword id="KW-0560">Oxidoreductase</keyword>
<keyword id="KW-0664">Pyridoxine biosynthesis</keyword>
<reference key="1">
    <citation type="journal article" date="2003" name="Nat. Genet.">
        <title>Comparative analysis of the genome sequences of Bordetella pertussis, Bordetella parapertussis and Bordetella bronchiseptica.</title>
        <authorList>
            <person name="Parkhill J."/>
            <person name="Sebaihia M."/>
            <person name="Preston A."/>
            <person name="Murphy L.D."/>
            <person name="Thomson N.R."/>
            <person name="Harris D.E."/>
            <person name="Holden M.T.G."/>
            <person name="Churcher C.M."/>
            <person name="Bentley S.D."/>
            <person name="Mungall K.L."/>
            <person name="Cerdeno-Tarraga A.-M."/>
            <person name="Temple L."/>
            <person name="James K.D."/>
            <person name="Harris B."/>
            <person name="Quail M.A."/>
            <person name="Achtman M."/>
            <person name="Atkin R."/>
            <person name="Baker S."/>
            <person name="Basham D."/>
            <person name="Bason N."/>
            <person name="Cherevach I."/>
            <person name="Chillingworth T."/>
            <person name="Collins M."/>
            <person name="Cronin A."/>
            <person name="Davis P."/>
            <person name="Doggett J."/>
            <person name="Feltwell T."/>
            <person name="Goble A."/>
            <person name="Hamlin N."/>
            <person name="Hauser H."/>
            <person name="Holroyd S."/>
            <person name="Jagels K."/>
            <person name="Leather S."/>
            <person name="Moule S."/>
            <person name="Norberczak H."/>
            <person name="O'Neil S."/>
            <person name="Ormond D."/>
            <person name="Price C."/>
            <person name="Rabbinowitsch E."/>
            <person name="Rutter S."/>
            <person name="Sanders M."/>
            <person name="Saunders D."/>
            <person name="Seeger K."/>
            <person name="Sharp S."/>
            <person name="Simmonds M."/>
            <person name="Skelton J."/>
            <person name="Squares R."/>
            <person name="Squares S."/>
            <person name="Stevens K."/>
            <person name="Unwin L."/>
            <person name="Whitehead S."/>
            <person name="Barrell B.G."/>
            <person name="Maskell D.J."/>
        </authorList>
    </citation>
    <scope>NUCLEOTIDE SEQUENCE [LARGE SCALE GENOMIC DNA]</scope>
    <source>
        <strain>12822 / ATCC BAA-587 / NCTC 13253</strain>
    </source>
</reference>
<organism>
    <name type="scientific">Bordetella parapertussis (strain 12822 / ATCC BAA-587 / NCTC 13253)</name>
    <dbReference type="NCBI Taxonomy" id="257311"/>
    <lineage>
        <taxon>Bacteria</taxon>
        <taxon>Pseudomonadati</taxon>
        <taxon>Pseudomonadota</taxon>
        <taxon>Betaproteobacteria</taxon>
        <taxon>Burkholderiales</taxon>
        <taxon>Alcaligenaceae</taxon>
        <taxon>Bordetella</taxon>
    </lineage>
</organism>
<protein>
    <recommendedName>
        <fullName evidence="1">Pyridoxine/pyridoxamine 5'-phosphate oxidase</fullName>
        <ecNumber evidence="1">1.4.3.5</ecNumber>
    </recommendedName>
    <alternativeName>
        <fullName evidence="1">PNP/PMP oxidase</fullName>
        <shortName evidence="1">PNPOx</shortName>
    </alternativeName>
    <alternativeName>
        <fullName evidence="1">Pyridoxal 5'-phosphate synthase</fullName>
    </alternativeName>
</protein>
<sequence length="210" mass="24281">MSVSDLRQSYEKGVLVEEQAAASPFQQFARWFDEAVAARVPEPNAMTLATVNAEGQPSARIVLIKGYDDAGFVFFTNYESRKGLDLDANPRASLLFFWQPLERQVRIEGVIEKVSAAESDEYFHSRPLGSRLGAWASRQSQPITRDELEAREREFRDRYGEHPPRPPHWGGYRLKPNRFEFWQGRPSRLHDRLRYEPDGKQGWTIDRLSP</sequence>
<name>PDXH_BORPA</name>
<comment type="function">
    <text evidence="1">Catalyzes the oxidation of either pyridoxine 5'-phosphate (PNP) or pyridoxamine 5'-phosphate (PMP) into pyridoxal 5'-phosphate (PLP).</text>
</comment>
<comment type="catalytic activity">
    <reaction evidence="1">
        <text>pyridoxamine 5'-phosphate + O2 + H2O = pyridoxal 5'-phosphate + H2O2 + NH4(+)</text>
        <dbReference type="Rhea" id="RHEA:15817"/>
        <dbReference type="ChEBI" id="CHEBI:15377"/>
        <dbReference type="ChEBI" id="CHEBI:15379"/>
        <dbReference type="ChEBI" id="CHEBI:16240"/>
        <dbReference type="ChEBI" id="CHEBI:28938"/>
        <dbReference type="ChEBI" id="CHEBI:58451"/>
        <dbReference type="ChEBI" id="CHEBI:597326"/>
        <dbReference type="EC" id="1.4.3.5"/>
    </reaction>
</comment>
<comment type="catalytic activity">
    <reaction evidence="1">
        <text>pyridoxine 5'-phosphate + O2 = pyridoxal 5'-phosphate + H2O2</text>
        <dbReference type="Rhea" id="RHEA:15149"/>
        <dbReference type="ChEBI" id="CHEBI:15379"/>
        <dbReference type="ChEBI" id="CHEBI:16240"/>
        <dbReference type="ChEBI" id="CHEBI:58589"/>
        <dbReference type="ChEBI" id="CHEBI:597326"/>
        <dbReference type="EC" id="1.4.3.5"/>
    </reaction>
</comment>
<comment type="cofactor">
    <cofactor evidence="1">
        <name>FMN</name>
        <dbReference type="ChEBI" id="CHEBI:58210"/>
    </cofactor>
    <text evidence="1">Binds 1 FMN per subunit.</text>
</comment>
<comment type="pathway">
    <text evidence="1">Cofactor metabolism; pyridoxal 5'-phosphate salvage; pyridoxal 5'-phosphate from pyridoxamine 5'-phosphate: step 1/1.</text>
</comment>
<comment type="pathway">
    <text evidence="1">Cofactor metabolism; pyridoxal 5'-phosphate salvage; pyridoxal 5'-phosphate from pyridoxine 5'-phosphate: step 1/1.</text>
</comment>
<comment type="subunit">
    <text evidence="1">Homodimer.</text>
</comment>
<comment type="similarity">
    <text evidence="1">Belongs to the pyridoxamine 5'-phosphate oxidase family.</text>
</comment>
<accession>Q7W4Q1</accession>